<sequence>MTHALLIGNPNCGKTTLFNALTNANQRVGNWPGVTVEKKTGEFLLGEHLIEITDLPGVYSLVANAEGISQDEQIAAQSVIDLEYDCIINVIDACHLERHLYLTSQLFELGKPVVVALNMMDIAEHRGISIDTEKLESLLGCSVIPIQAHKNIGVPALQQSLLHCSQKIKPLKLSLSVAAQQILNDLENQLISKGYKNSFAYYFSRRLAEGDTLIGEKAFTESLLIKLQKTEQNLDVLLADARYQKIHEIVTLVQKKHSDASEHFTAKLDKLVLHRFLALPIFFAMMYLMFLFAINIGGAFQDFFDISTETIFVQGSGWLLQQLHAPNWVIALVANGIGKGINTTITFIPVIAAMFFFLSLLETSGYMARAAFVVDKAMRAMGLPGKSFVPMIVGFGCNVPAIMAARTLDSERDRLLTVMMSPFMSCSARLAIYAVFVAAFFPSGGHNVVFSLYLIGILMAVFTGYILRKTTLKGHASPLILELPAYHRPSLRRLLRETSLRLRFFVYRAGKLIIPICVILGGLNAITWGGGISSGEANTDSLLSIIGQWITPLFAPMGIHQDNWPATVGLLTGMLAKEVVVGTLNSLYAQVGHVGEITAAHFDFLGGIKAAFGSIPANLSELGSALWNPVSASAADSELSQSVYGIMSRRFDGAVGAYAYLLFVLLYIPCVSTMAVIRQEANKRFMWTSIVWSFVVAYATSVVFYQGAKFLEHPQQSMIWILAMSLSLLFVLAVFRYSQYGMGRQNAAANT</sequence>
<evidence type="ECO:0000250" key="1">
    <source>
        <dbReference type="UniProtKB" id="P33650"/>
    </source>
</evidence>
<evidence type="ECO:0000250" key="2">
    <source>
        <dbReference type="UniProtKB" id="Q8GNS3"/>
    </source>
</evidence>
<evidence type="ECO:0000255" key="3"/>
<evidence type="ECO:0000255" key="4">
    <source>
        <dbReference type="PROSITE-ProRule" id="PRU01048"/>
    </source>
</evidence>
<evidence type="ECO:0000305" key="5"/>
<organism>
    <name type="scientific">Legionella pneumophila (strain Lens)</name>
    <dbReference type="NCBI Taxonomy" id="297245"/>
    <lineage>
        <taxon>Bacteria</taxon>
        <taxon>Pseudomonadati</taxon>
        <taxon>Pseudomonadota</taxon>
        <taxon>Gammaproteobacteria</taxon>
        <taxon>Legionellales</taxon>
        <taxon>Legionellaceae</taxon>
        <taxon>Legionella</taxon>
    </lineage>
</organism>
<name>FEOB_LEGPL</name>
<protein>
    <recommendedName>
        <fullName evidence="5">Fe(2+) transporter FeoB</fullName>
    </recommendedName>
    <alternativeName>
        <fullName>Ferrous iron transport protein B</fullName>
    </alternativeName>
</protein>
<reference key="1">
    <citation type="journal article" date="2004" name="Nat. Genet.">
        <title>Evidence in the Legionella pneumophila genome for exploitation of host cell functions and high genome plasticity.</title>
        <authorList>
            <person name="Cazalet C."/>
            <person name="Rusniok C."/>
            <person name="Brueggemann H."/>
            <person name="Zidane N."/>
            <person name="Magnier A."/>
            <person name="Ma L."/>
            <person name="Tichit M."/>
            <person name="Jarraud S."/>
            <person name="Bouchier C."/>
            <person name="Vandenesch F."/>
            <person name="Kunst F."/>
            <person name="Etienne J."/>
            <person name="Glaser P."/>
            <person name="Buchrieser C."/>
        </authorList>
    </citation>
    <scope>NUCLEOTIDE SEQUENCE [LARGE SCALE GENOMIC DNA]</scope>
    <source>
        <strain>Lens</strain>
    </source>
</reference>
<keyword id="KW-0997">Cell inner membrane</keyword>
<keyword id="KW-1003">Cell membrane</keyword>
<keyword id="KW-0342">GTP-binding</keyword>
<keyword id="KW-0406">Ion transport</keyword>
<keyword id="KW-0408">Iron</keyword>
<keyword id="KW-0410">Iron transport</keyword>
<keyword id="KW-0472">Membrane</keyword>
<keyword id="KW-0547">Nucleotide-binding</keyword>
<keyword id="KW-0812">Transmembrane</keyword>
<keyword id="KW-1133">Transmembrane helix</keyword>
<keyword id="KW-0813">Transport</keyword>
<dbReference type="EMBL" id="CR628337">
    <property type="protein sequence ID" value="CAH16825.1"/>
    <property type="molecule type" value="Genomic_DNA"/>
</dbReference>
<dbReference type="RefSeq" id="WP_011216528.1">
    <property type="nucleotide sequence ID" value="NC_006369.1"/>
</dbReference>
<dbReference type="SMR" id="Q5WTE1"/>
<dbReference type="KEGG" id="lpf:lpl2584"/>
<dbReference type="LegioList" id="lpl2584"/>
<dbReference type="HOGENOM" id="CLU_013350_3_0_6"/>
<dbReference type="Proteomes" id="UP000002517">
    <property type="component" value="Chromosome"/>
</dbReference>
<dbReference type="GO" id="GO:0005886">
    <property type="term" value="C:plasma membrane"/>
    <property type="evidence" value="ECO:0007669"/>
    <property type="project" value="UniProtKB-SubCell"/>
</dbReference>
<dbReference type="GO" id="GO:0015093">
    <property type="term" value="F:ferrous iron transmembrane transporter activity"/>
    <property type="evidence" value="ECO:0007669"/>
    <property type="project" value="InterPro"/>
</dbReference>
<dbReference type="GO" id="GO:0005525">
    <property type="term" value="F:GTP binding"/>
    <property type="evidence" value="ECO:0007669"/>
    <property type="project" value="UniProtKB-KW"/>
</dbReference>
<dbReference type="CDD" id="cd01879">
    <property type="entry name" value="FeoB"/>
    <property type="match status" value="1"/>
</dbReference>
<dbReference type="FunFam" id="3.40.50.300:FF:000426">
    <property type="entry name" value="Ferrous iron transport protein B"/>
    <property type="match status" value="1"/>
</dbReference>
<dbReference type="Gene3D" id="1.10.287.1770">
    <property type="match status" value="1"/>
</dbReference>
<dbReference type="Gene3D" id="3.40.50.300">
    <property type="entry name" value="P-loop containing nucleotide triphosphate hydrolases"/>
    <property type="match status" value="1"/>
</dbReference>
<dbReference type="InterPro" id="IPR003373">
    <property type="entry name" value="Fe2_transport_prot-B"/>
</dbReference>
<dbReference type="InterPro" id="IPR011640">
    <property type="entry name" value="Fe2_transport_prot_B_C"/>
</dbReference>
<dbReference type="InterPro" id="IPR050860">
    <property type="entry name" value="FeoB_GTPase"/>
</dbReference>
<dbReference type="InterPro" id="IPR030389">
    <property type="entry name" value="G_FEOB_dom"/>
</dbReference>
<dbReference type="InterPro" id="IPR011642">
    <property type="entry name" value="Gate_dom"/>
</dbReference>
<dbReference type="InterPro" id="IPR006073">
    <property type="entry name" value="GTP-bd"/>
</dbReference>
<dbReference type="InterPro" id="IPR027417">
    <property type="entry name" value="P-loop_NTPase"/>
</dbReference>
<dbReference type="NCBIfam" id="TIGR00437">
    <property type="entry name" value="feoB"/>
    <property type="match status" value="1"/>
</dbReference>
<dbReference type="NCBIfam" id="NF007105">
    <property type="entry name" value="PRK09554.1"/>
    <property type="match status" value="1"/>
</dbReference>
<dbReference type="PANTHER" id="PTHR43185:SF1">
    <property type="entry name" value="FE(2+) TRANSPORTER FEOB"/>
    <property type="match status" value="1"/>
</dbReference>
<dbReference type="PANTHER" id="PTHR43185">
    <property type="entry name" value="FERROUS IRON TRANSPORT PROTEIN B"/>
    <property type="match status" value="1"/>
</dbReference>
<dbReference type="Pfam" id="PF07664">
    <property type="entry name" value="FeoB_C"/>
    <property type="match status" value="1"/>
</dbReference>
<dbReference type="Pfam" id="PF02421">
    <property type="entry name" value="FeoB_N"/>
    <property type="match status" value="1"/>
</dbReference>
<dbReference type="Pfam" id="PF07670">
    <property type="entry name" value="Gate"/>
    <property type="match status" value="2"/>
</dbReference>
<dbReference type="PRINTS" id="PR00326">
    <property type="entry name" value="GTP1OBG"/>
</dbReference>
<dbReference type="SUPFAM" id="SSF52540">
    <property type="entry name" value="P-loop containing nucleoside triphosphate hydrolases"/>
    <property type="match status" value="1"/>
</dbReference>
<dbReference type="PROSITE" id="PS51711">
    <property type="entry name" value="G_FEOB"/>
    <property type="match status" value="1"/>
</dbReference>
<accession>Q5WTE1</accession>
<feature type="chain" id="PRO_0000210835" description="Fe(2+) transporter FeoB">
    <location>
        <begin position="1"/>
        <end position="751"/>
    </location>
</feature>
<feature type="transmembrane region" description="Helical" evidence="3">
    <location>
        <begin position="276"/>
        <end position="296"/>
    </location>
</feature>
<feature type="transmembrane region" description="Helical" evidence="3">
    <location>
        <begin position="341"/>
        <end position="361"/>
    </location>
</feature>
<feature type="transmembrane region" description="Helical" evidence="3">
    <location>
        <begin position="385"/>
        <end position="405"/>
    </location>
</feature>
<feature type="transmembrane region" description="Helical" evidence="3">
    <location>
        <begin position="422"/>
        <end position="442"/>
    </location>
</feature>
<feature type="transmembrane region" description="Helical" evidence="3">
    <location>
        <begin position="447"/>
        <end position="467"/>
    </location>
</feature>
<feature type="transmembrane region" description="Helical" evidence="3">
    <location>
        <begin position="512"/>
        <end position="532"/>
    </location>
</feature>
<feature type="transmembrane region" description="Helical" evidence="3">
    <location>
        <begin position="539"/>
        <end position="559"/>
    </location>
</feature>
<feature type="transmembrane region" description="Helical" evidence="3">
    <location>
        <begin position="657"/>
        <end position="677"/>
    </location>
</feature>
<feature type="transmembrane region" description="Helical" evidence="3">
    <location>
        <begin position="685"/>
        <end position="705"/>
    </location>
</feature>
<feature type="transmembrane region" description="Helical" evidence="3">
    <location>
        <begin position="715"/>
        <end position="735"/>
    </location>
</feature>
<feature type="domain" description="FeoB-type G" evidence="4">
    <location>
        <begin position="1"/>
        <end position="167"/>
    </location>
</feature>
<feature type="binding site" evidence="4">
    <location>
        <begin position="8"/>
        <end position="15"/>
    </location>
    <ligand>
        <name>GTP</name>
        <dbReference type="ChEBI" id="CHEBI:37565"/>
        <label>1</label>
    </ligand>
</feature>
<feature type="binding site" evidence="4">
    <location>
        <begin position="33"/>
        <end position="37"/>
    </location>
    <ligand>
        <name>GTP</name>
        <dbReference type="ChEBI" id="CHEBI:37565"/>
        <label>2</label>
    </ligand>
</feature>
<feature type="binding site" evidence="4">
    <location>
        <begin position="54"/>
        <end position="57"/>
    </location>
    <ligand>
        <name>GTP</name>
        <dbReference type="ChEBI" id="CHEBI:37565"/>
        <label>3</label>
    </ligand>
</feature>
<feature type="binding site" evidence="4">
    <location>
        <begin position="118"/>
        <end position="121"/>
    </location>
    <ligand>
        <name>GTP</name>
        <dbReference type="ChEBI" id="CHEBI:37565"/>
    </ligand>
</feature>
<feature type="binding site" evidence="4">
    <location>
        <begin position="147"/>
        <end position="149"/>
    </location>
    <ligand>
        <name>GTP</name>
        <dbReference type="ChEBI" id="CHEBI:37565"/>
    </ligand>
</feature>
<comment type="function">
    <text evidence="2">Probable transporter of a GTP-driven Fe(2+) uptake system.</text>
</comment>
<comment type="subcellular location">
    <subcellularLocation>
        <location evidence="1">Cell inner membrane</location>
        <topology evidence="1">Multi-pass membrane protein</topology>
    </subcellularLocation>
</comment>
<comment type="similarity">
    <text evidence="4">Belongs to the TRAFAC class TrmE-Era-EngA-EngB-Septin-like GTPase superfamily. FeoB GTPase (TC 9.A.8) family.</text>
</comment>
<gene>
    <name type="primary">feoB</name>
    <name type="ordered locus">lpl2584</name>
</gene>
<proteinExistence type="inferred from homology"/>